<accession>A5UZX0</accession>
<keyword id="KW-0067">ATP-binding</keyword>
<keyword id="KW-0119">Carbohydrate metabolism</keyword>
<keyword id="KW-0963">Cytoplasm</keyword>
<keyword id="KW-0299">Galactose metabolism</keyword>
<keyword id="KW-0418">Kinase</keyword>
<keyword id="KW-0460">Magnesium</keyword>
<keyword id="KW-0479">Metal-binding</keyword>
<keyword id="KW-0547">Nucleotide-binding</keyword>
<keyword id="KW-0808">Transferase</keyword>
<proteinExistence type="inferred from homology"/>
<feature type="chain" id="PRO_1000100837" description="Galactokinase">
    <location>
        <begin position="1"/>
        <end position="391"/>
    </location>
</feature>
<feature type="active site" description="Proton acceptor" evidence="1">
    <location>
        <position position="171"/>
    </location>
</feature>
<feature type="binding site" evidence="1">
    <location>
        <begin position="34"/>
        <end position="37"/>
    </location>
    <ligand>
        <name>substrate</name>
    </ligand>
</feature>
<feature type="binding site" evidence="1">
    <location>
        <begin position="121"/>
        <end position="127"/>
    </location>
    <ligand>
        <name>ATP</name>
        <dbReference type="ChEBI" id="CHEBI:30616"/>
    </ligand>
</feature>
<feature type="binding site" evidence="1">
    <location>
        <position position="127"/>
    </location>
    <ligand>
        <name>Mg(2+)</name>
        <dbReference type="ChEBI" id="CHEBI:18420"/>
    </ligand>
</feature>
<feature type="binding site" evidence="1">
    <location>
        <position position="159"/>
    </location>
    <ligand>
        <name>Mg(2+)</name>
        <dbReference type="ChEBI" id="CHEBI:18420"/>
    </ligand>
</feature>
<feature type="binding site" evidence="1">
    <location>
        <position position="220"/>
    </location>
    <ligand>
        <name>substrate</name>
    </ligand>
</feature>
<feature type="site" description="Transition state stabilizer" evidence="1">
    <location>
        <position position="28"/>
    </location>
</feature>
<evidence type="ECO:0000255" key="1">
    <source>
        <dbReference type="HAMAP-Rule" id="MF_00246"/>
    </source>
</evidence>
<gene>
    <name evidence="1" type="primary">galK</name>
    <name type="ordered locus">RoseRS_3819</name>
</gene>
<dbReference type="EC" id="2.7.1.6" evidence="1"/>
<dbReference type="EMBL" id="CP000686">
    <property type="protein sequence ID" value="ABQ92173.1"/>
    <property type="molecule type" value="Genomic_DNA"/>
</dbReference>
<dbReference type="RefSeq" id="WP_011958514.1">
    <property type="nucleotide sequence ID" value="NC_009523.1"/>
</dbReference>
<dbReference type="SMR" id="A5UZX0"/>
<dbReference type="STRING" id="357808.RoseRS_3819"/>
<dbReference type="KEGG" id="rrs:RoseRS_3819"/>
<dbReference type="eggNOG" id="COG0153">
    <property type="taxonomic scope" value="Bacteria"/>
</dbReference>
<dbReference type="HOGENOM" id="CLU_017814_2_1_0"/>
<dbReference type="OrthoDB" id="250531at2"/>
<dbReference type="UniPathway" id="UPA00214"/>
<dbReference type="Proteomes" id="UP000006554">
    <property type="component" value="Chromosome"/>
</dbReference>
<dbReference type="GO" id="GO:0005829">
    <property type="term" value="C:cytosol"/>
    <property type="evidence" value="ECO:0007669"/>
    <property type="project" value="TreeGrafter"/>
</dbReference>
<dbReference type="GO" id="GO:0005524">
    <property type="term" value="F:ATP binding"/>
    <property type="evidence" value="ECO:0007669"/>
    <property type="project" value="UniProtKB-UniRule"/>
</dbReference>
<dbReference type="GO" id="GO:0004335">
    <property type="term" value="F:galactokinase activity"/>
    <property type="evidence" value="ECO:0007669"/>
    <property type="project" value="UniProtKB-UniRule"/>
</dbReference>
<dbReference type="GO" id="GO:0000287">
    <property type="term" value="F:magnesium ion binding"/>
    <property type="evidence" value="ECO:0007669"/>
    <property type="project" value="UniProtKB-UniRule"/>
</dbReference>
<dbReference type="GO" id="GO:0006012">
    <property type="term" value="P:galactose metabolic process"/>
    <property type="evidence" value="ECO:0007669"/>
    <property type="project" value="UniProtKB-UniRule"/>
</dbReference>
<dbReference type="FunFam" id="3.30.230.10:FF:000017">
    <property type="entry name" value="Galactokinase"/>
    <property type="match status" value="1"/>
</dbReference>
<dbReference type="FunFam" id="3.30.70.890:FF:000001">
    <property type="entry name" value="Galactokinase"/>
    <property type="match status" value="1"/>
</dbReference>
<dbReference type="Gene3D" id="3.30.230.10">
    <property type="match status" value="1"/>
</dbReference>
<dbReference type="Gene3D" id="3.30.70.890">
    <property type="entry name" value="GHMP kinase, C-terminal domain"/>
    <property type="match status" value="1"/>
</dbReference>
<dbReference type="HAMAP" id="MF_00246">
    <property type="entry name" value="Galactokinase"/>
    <property type="match status" value="1"/>
</dbReference>
<dbReference type="InterPro" id="IPR000705">
    <property type="entry name" value="Galactokinase"/>
</dbReference>
<dbReference type="InterPro" id="IPR022963">
    <property type="entry name" value="Galactokinase_bac"/>
</dbReference>
<dbReference type="InterPro" id="IPR019741">
    <property type="entry name" value="Galactokinase_CS"/>
</dbReference>
<dbReference type="InterPro" id="IPR019539">
    <property type="entry name" value="GalKase_N"/>
</dbReference>
<dbReference type="InterPro" id="IPR013750">
    <property type="entry name" value="GHMP_kinase_C_dom"/>
</dbReference>
<dbReference type="InterPro" id="IPR036554">
    <property type="entry name" value="GHMP_kinase_C_sf"/>
</dbReference>
<dbReference type="InterPro" id="IPR006204">
    <property type="entry name" value="GHMP_kinase_N_dom"/>
</dbReference>
<dbReference type="InterPro" id="IPR006203">
    <property type="entry name" value="GHMP_knse_ATP-bd_CS"/>
</dbReference>
<dbReference type="InterPro" id="IPR006206">
    <property type="entry name" value="Mevalonate/galactokinase"/>
</dbReference>
<dbReference type="InterPro" id="IPR020568">
    <property type="entry name" value="Ribosomal_Su5_D2-typ_SF"/>
</dbReference>
<dbReference type="InterPro" id="IPR014721">
    <property type="entry name" value="Ribsml_uS5_D2-typ_fold_subgr"/>
</dbReference>
<dbReference type="NCBIfam" id="TIGR00131">
    <property type="entry name" value="gal_kin"/>
    <property type="match status" value="1"/>
</dbReference>
<dbReference type="NCBIfam" id="NF003705">
    <property type="entry name" value="PRK05322.1"/>
    <property type="match status" value="1"/>
</dbReference>
<dbReference type="PANTHER" id="PTHR10457:SF7">
    <property type="entry name" value="GALACTOKINASE-RELATED"/>
    <property type="match status" value="1"/>
</dbReference>
<dbReference type="PANTHER" id="PTHR10457">
    <property type="entry name" value="MEVALONATE KINASE/GALACTOKINASE"/>
    <property type="match status" value="1"/>
</dbReference>
<dbReference type="Pfam" id="PF10509">
    <property type="entry name" value="GalKase_gal_bdg"/>
    <property type="match status" value="1"/>
</dbReference>
<dbReference type="Pfam" id="PF08544">
    <property type="entry name" value="GHMP_kinases_C"/>
    <property type="match status" value="1"/>
</dbReference>
<dbReference type="Pfam" id="PF00288">
    <property type="entry name" value="GHMP_kinases_N"/>
    <property type="match status" value="1"/>
</dbReference>
<dbReference type="PIRSF" id="PIRSF000530">
    <property type="entry name" value="Galactokinase"/>
    <property type="match status" value="1"/>
</dbReference>
<dbReference type="PRINTS" id="PR00473">
    <property type="entry name" value="GALCTOKINASE"/>
</dbReference>
<dbReference type="PRINTS" id="PR00959">
    <property type="entry name" value="MEVGALKINASE"/>
</dbReference>
<dbReference type="SUPFAM" id="SSF55060">
    <property type="entry name" value="GHMP Kinase, C-terminal domain"/>
    <property type="match status" value="1"/>
</dbReference>
<dbReference type="SUPFAM" id="SSF54211">
    <property type="entry name" value="Ribosomal protein S5 domain 2-like"/>
    <property type="match status" value="1"/>
</dbReference>
<dbReference type="PROSITE" id="PS00106">
    <property type="entry name" value="GALACTOKINASE"/>
    <property type="match status" value="1"/>
</dbReference>
<dbReference type="PROSITE" id="PS00627">
    <property type="entry name" value="GHMP_KINASES_ATP"/>
    <property type="match status" value="1"/>
</dbReference>
<protein>
    <recommendedName>
        <fullName evidence="1">Galactokinase</fullName>
        <ecNumber evidence="1">2.7.1.6</ecNumber>
    </recommendedName>
    <alternativeName>
        <fullName evidence="1">Galactose kinase</fullName>
    </alternativeName>
</protein>
<comment type="function">
    <text evidence="1">Catalyzes the transfer of the gamma-phosphate of ATP to D-galactose to form alpha-D-galactose-1-phosphate (Gal-1-P).</text>
</comment>
<comment type="catalytic activity">
    <reaction evidence="1">
        <text>alpha-D-galactose + ATP = alpha-D-galactose 1-phosphate + ADP + H(+)</text>
        <dbReference type="Rhea" id="RHEA:13553"/>
        <dbReference type="ChEBI" id="CHEBI:15378"/>
        <dbReference type="ChEBI" id="CHEBI:28061"/>
        <dbReference type="ChEBI" id="CHEBI:30616"/>
        <dbReference type="ChEBI" id="CHEBI:58336"/>
        <dbReference type="ChEBI" id="CHEBI:456216"/>
        <dbReference type="EC" id="2.7.1.6"/>
    </reaction>
</comment>
<comment type="pathway">
    <text evidence="1">Carbohydrate metabolism; galactose metabolism.</text>
</comment>
<comment type="subcellular location">
    <subcellularLocation>
        <location evidence="1">Cytoplasm</location>
    </subcellularLocation>
</comment>
<comment type="similarity">
    <text evidence="1">Belongs to the GHMP kinase family. GalK subfamily.</text>
</comment>
<organism>
    <name type="scientific">Roseiflexus sp. (strain RS-1)</name>
    <dbReference type="NCBI Taxonomy" id="357808"/>
    <lineage>
        <taxon>Bacteria</taxon>
        <taxon>Bacillati</taxon>
        <taxon>Chloroflexota</taxon>
        <taxon>Chloroflexia</taxon>
        <taxon>Chloroflexales</taxon>
        <taxon>Roseiflexineae</taxon>
        <taxon>Roseiflexaceae</taxon>
        <taxon>Roseiflexus</taxon>
    </lineage>
</organism>
<reference key="1">
    <citation type="submission" date="2007-04" db="EMBL/GenBank/DDBJ databases">
        <title>Complete sequence of Roseiflexus sp. RS-1.</title>
        <authorList>
            <consortium name="US DOE Joint Genome Institute"/>
            <person name="Copeland A."/>
            <person name="Lucas S."/>
            <person name="Lapidus A."/>
            <person name="Barry K."/>
            <person name="Detter J.C."/>
            <person name="Glavina del Rio T."/>
            <person name="Hammon N."/>
            <person name="Israni S."/>
            <person name="Dalin E."/>
            <person name="Tice H."/>
            <person name="Pitluck S."/>
            <person name="Chertkov O."/>
            <person name="Brettin T."/>
            <person name="Bruce D."/>
            <person name="Han C."/>
            <person name="Schmutz J."/>
            <person name="Larimer F."/>
            <person name="Land M."/>
            <person name="Hauser L."/>
            <person name="Kyrpides N."/>
            <person name="Mikhailova N."/>
            <person name="Bryant D.A."/>
            <person name="Richardson P."/>
        </authorList>
    </citation>
    <scope>NUCLEOTIDE SEQUENCE [LARGE SCALE GENOMIC DNA]</scope>
    <source>
        <strain>RS-1</strain>
    </source>
</reference>
<name>GAL1_ROSS1</name>
<sequence>MLDTGELRERFQQHYGIHPHVIVRAPGRVNLIGEHTDYNDGFVFPVAIDRATCVAARPRTDRIVRVMAADLHDEDLFSIDQIERSNRAWHNYIRGVVLALRTAGHTLSGADMLIASDVPRGAGLSSSAALEVAVAYTFQVLNRLNILGEELALLAQGAENTFVGVQCGIMDQLIAVFGRADHALLIDCRDLTYRAVPLPPSVAVVVCDSHIARTLAASAYNQRRQECDAAVRALQQWYPGIRALRDVSEDQLAAHQHELPEPLRARARHVVSENRRALQGAAALEAGDIATFGRLMNESHASLRDDYQVSLPDIDFLVTTAQSLAGCYGSRLTGAGFGGCTVSLVERSSVETFRHDLAQAYHDATGRTATIYVCRASDGVGRVMDNARPQE</sequence>